<organism>
    <name type="scientific">Mycobacterium tuberculosis (strain CDC 1551 / Oshkosh)</name>
    <dbReference type="NCBI Taxonomy" id="83331"/>
    <lineage>
        <taxon>Bacteria</taxon>
        <taxon>Bacillati</taxon>
        <taxon>Actinomycetota</taxon>
        <taxon>Actinomycetes</taxon>
        <taxon>Mycobacteriales</taxon>
        <taxon>Mycobacteriaceae</taxon>
        <taxon>Mycobacterium</taxon>
        <taxon>Mycobacterium tuberculosis complex</taxon>
    </lineage>
</organism>
<name>PKNL_MYCTO</name>
<comment type="function">
    <text evidence="1">Phosphorylates the DNA-binding protein MT2231. May be involved in the regulation of cell division and cell envelope biosynthesis (By similarity).</text>
</comment>
<comment type="catalytic activity">
    <reaction>
        <text>L-seryl-[protein] + ATP = O-phospho-L-seryl-[protein] + ADP + H(+)</text>
        <dbReference type="Rhea" id="RHEA:17989"/>
        <dbReference type="Rhea" id="RHEA-COMP:9863"/>
        <dbReference type="Rhea" id="RHEA-COMP:11604"/>
        <dbReference type="ChEBI" id="CHEBI:15378"/>
        <dbReference type="ChEBI" id="CHEBI:29999"/>
        <dbReference type="ChEBI" id="CHEBI:30616"/>
        <dbReference type="ChEBI" id="CHEBI:83421"/>
        <dbReference type="ChEBI" id="CHEBI:456216"/>
        <dbReference type="EC" id="2.7.11.1"/>
    </reaction>
</comment>
<comment type="catalytic activity">
    <reaction>
        <text>L-threonyl-[protein] + ATP = O-phospho-L-threonyl-[protein] + ADP + H(+)</text>
        <dbReference type="Rhea" id="RHEA:46608"/>
        <dbReference type="Rhea" id="RHEA-COMP:11060"/>
        <dbReference type="Rhea" id="RHEA-COMP:11605"/>
        <dbReference type="ChEBI" id="CHEBI:15378"/>
        <dbReference type="ChEBI" id="CHEBI:30013"/>
        <dbReference type="ChEBI" id="CHEBI:30616"/>
        <dbReference type="ChEBI" id="CHEBI:61977"/>
        <dbReference type="ChEBI" id="CHEBI:456216"/>
        <dbReference type="EC" id="2.7.11.1"/>
    </reaction>
</comment>
<comment type="subcellular location">
    <subcellularLocation>
        <location evidence="1">Cell membrane</location>
        <topology evidence="1">Single-pass membrane protein</topology>
    </subcellularLocation>
</comment>
<comment type="PTM">
    <text evidence="1">Autophosphorylated. Thr-173 is required for autophosphorylation and transphosphorylation activities. Thr-175 is not necessary for autophosphorylation activity, but is required for full kinase activity (By similarity).</text>
</comment>
<comment type="similarity">
    <text evidence="3">Belongs to the protein kinase superfamily. Ser/Thr protein kinase family.</text>
</comment>
<proteinExistence type="inferred from homology"/>
<feature type="chain" id="PRO_0000428062" description="Serine/threonine-protein kinase PknL">
    <location>
        <begin position="1"/>
        <end position="399"/>
    </location>
</feature>
<feature type="topological domain" description="Cytoplasmic" evidence="2">
    <location>
        <begin position="1"/>
        <end position="368"/>
    </location>
</feature>
<feature type="transmembrane region" description="Helical" evidence="2">
    <location>
        <begin position="369"/>
        <end position="389"/>
    </location>
</feature>
<feature type="topological domain" description="Extracellular" evidence="2">
    <location>
        <begin position="390"/>
        <end position="399"/>
    </location>
</feature>
<feature type="domain" description="Protein kinase" evidence="3">
    <location>
        <begin position="19"/>
        <end position="278"/>
    </location>
</feature>
<feature type="region of interest" description="Disordered" evidence="5">
    <location>
        <begin position="312"/>
        <end position="346"/>
    </location>
</feature>
<feature type="active site" description="Proton acceptor" evidence="3 4">
    <location>
        <position position="142"/>
    </location>
</feature>
<feature type="binding site" evidence="3">
    <location>
        <begin position="25"/>
        <end position="33"/>
    </location>
    <ligand>
        <name>ATP</name>
        <dbReference type="ChEBI" id="CHEBI:30616"/>
    </ligand>
</feature>
<feature type="binding site" evidence="3">
    <location>
        <position position="48"/>
    </location>
    <ligand>
        <name>ATP</name>
        <dbReference type="ChEBI" id="CHEBI:30616"/>
    </ligand>
</feature>
<feature type="modified residue" description="Phosphothreonine; by autocatalysis" evidence="1">
    <location>
        <position position="32"/>
    </location>
</feature>
<feature type="modified residue" description="Phosphothreonine; by autocatalysis" evidence="1">
    <location>
        <position position="62"/>
    </location>
</feature>
<feature type="modified residue" description="Phosphothreonine; by autocatalysis" evidence="1">
    <location>
        <position position="173"/>
    </location>
</feature>
<feature type="modified residue" description="Phosphothreonine; by autocatalysis" evidence="1">
    <location>
        <position position="175"/>
    </location>
</feature>
<feature type="modified residue" description="Phosphothreonine; by autocatalysis" evidence="1">
    <location>
        <position position="323"/>
    </location>
</feature>
<sequence length="399" mass="42834">MVEAGTRDPLESALLDSRYLVQAKIASGGTSTVYRGLDVRLDRPVALKVMDSRYAGDEQFLTRFRLEARAVARLNNRALVAVYDQGKDGRHPFLVMELIEGGTLRELLIERGPMPPHAVVAVLRPVLGGLAAAHRAGLVHRDVKPENILISDDGDVKLADFGLVRAVAAASITSTGVILGTAAYLSPEQVRDGNADPRSDVYSVGVLVYELLTGHTPFTGDSALSIAYQRLDADVPRASAVIDGVPPQFDELVACATARNPADRYADAIAMGADLEAIAEELALPEFRVPAPRNSAQHRSAALYRSRITQQGQLGAKPVHHPTRQLTRQPGDCSEPASGSEPEHEPITGQFAGIAIEEFIWARQHARRMVLVWVSVVLAITGLVASAAWTIGSNLSGLL</sequence>
<reference key="1">
    <citation type="journal article" date="2002" name="J. Bacteriol.">
        <title>Whole-genome comparison of Mycobacterium tuberculosis clinical and laboratory strains.</title>
        <authorList>
            <person name="Fleischmann R.D."/>
            <person name="Alland D."/>
            <person name="Eisen J.A."/>
            <person name="Carpenter L."/>
            <person name="White O."/>
            <person name="Peterson J.D."/>
            <person name="DeBoy R.T."/>
            <person name="Dodson R.J."/>
            <person name="Gwinn M.L."/>
            <person name="Haft D.H."/>
            <person name="Hickey E.K."/>
            <person name="Kolonay J.F."/>
            <person name="Nelson W.C."/>
            <person name="Umayam L.A."/>
            <person name="Ermolaeva M.D."/>
            <person name="Salzberg S.L."/>
            <person name="Delcher A."/>
            <person name="Utterback T.R."/>
            <person name="Weidman J.F."/>
            <person name="Khouri H.M."/>
            <person name="Gill J."/>
            <person name="Mikula A."/>
            <person name="Bishai W."/>
            <person name="Jacobs W.R. Jr."/>
            <person name="Venter J.C."/>
            <person name="Fraser C.M."/>
        </authorList>
    </citation>
    <scope>NUCLEOTIDE SEQUENCE [LARGE SCALE GENOMIC DNA]</scope>
    <source>
        <strain>CDC 1551 / Oshkosh</strain>
    </source>
</reference>
<gene>
    <name type="primary">pknL</name>
    <name type="ordered locus">MT2232</name>
</gene>
<accession>P9WI62</accession>
<accession>L0TAE8</accession>
<accession>O53510</accession>
<keyword id="KW-0067">ATP-binding</keyword>
<keyword id="KW-1003">Cell membrane</keyword>
<keyword id="KW-0418">Kinase</keyword>
<keyword id="KW-0472">Membrane</keyword>
<keyword id="KW-0547">Nucleotide-binding</keyword>
<keyword id="KW-0597">Phosphoprotein</keyword>
<keyword id="KW-1185">Reference proteome</keyword>
<keyword id="KW-0723">Serine/threonine-protein kinase</keyword>
<keyword id="KW-0808">Transferase</keyword>
<keyword id="KW-0812">Transmembrane</keyword>
<keyword id="KW-1133">Transmembrane helix</keyword>
<protein>
    <recommendedName>
        <fullName>Serine/threonine-protein kinase PknL</fullName>
        <ecNumber>2.7.11.1</ecNumber>
    </recommendedName>
</protein>
<dbReference type="EC" id="2.7.11.1"/>
<dbReference type="EMBL" id="AE000516">
    <property type="protein sequence ID" value="AAK46517.1"/>
    <property type="molecule type" value="Genomic_DNA"/>
</dbReference>
<dbReference type="PIR" id="B70936">
    <property type="entry name" value="B70936"/>
</dbReference>
<dbReference type="RefSeq" id="WP_003899202.1">
    <property type="nucleotide sequence ID" value="NZ_KK341227.1"/>
</dbReference>
<dbReference type="SMR" id="P9WI62"/>
<dbReference type="KEGG" id="mtc:MT2232"/>
<dbReference type="PATRIC" id="fig|83331.31.peg.2406"/>
<dbReference type="HOGENOM" id="CLU_000288_63_44_11"/>
<dbReference type="Proteomes" id="UP000001020">
    <property type="component" value="Chromosome"/>
</dbReference>
<dbReference type="GO" id="GO:0005886">
    <property type="term" value="C:plasma membrane"/>
    <property type="evidence" value="ECO:0007669"/>
    <property type="project" value="UniProtKB-SubCell"/>
</dbReference>
<dbReference type="GO" id="GO:0005524">
    <property type="term" value="F:ATP binding"/>
    <property type="evidence" value="ECO:0007669"/>
    <property type="project" value="UniProtKB-KW"/>
</dbReference>
<dbReference type="GO" id="GO:0106310">
    <property type="term" value="F:protein serine kinase activity"/>
    <property type="evidence" value="ECO:0007669"/>
    <property type="project" value="RHEA"/>
</dbReference>
<dbReference type="GO" id="GO:0004674">
    <property type="term" value="F:protein serine/threonine kinase activity"/>
    <property type="evidence" value="ECO:0007669"/>
    <property type="project" value="UniProtKB-KW"/>
</dbReference>
<dbReference type="GO" id="GO:0080090">
    <property type="term" value="P:regulation of primary metabolic process"/>
    <property type="evidence" value="ECO:0007669"/>
    <property type="project" value="UniProtKB-ARBA"/>
</dbReference>
<dbReference type="CDD" id="cd14014">
    <property type="entry name" value="STKc_PknB_like"/>
    <property type="match status" value="1"/>
</dbReference>
<dbReference type="FunFam" id="1.10.510.10:FF:000021">
    <property type="entry name" value="Serine/threonine protein kinase"/>
    <property type="match status" value="1"/>
</dbReference>
<dbReference type="FunFam" id="3.30.200.20:FF:000035">
    <property type="entry name" value="Serine/threonine protein kinase Stk1"/>
    <property type="match status" value="1"/>
</dbReference>
<dbReference type="Gene3D" id="3.30.200.20">
    <property type="entry name" value="Phosphorylase Kinase, domain 1"/>
    <property type="match status" value="1"/>
</dbReference>
<dbReference type="Gene3D" id="1.10.510.10">
    <property type="entry name" value="Transferase(Phosphotransferase) domain 1"/>
    <property type="match status" value="1"/>
</dbReference>
<dbReference type="InterPro" id="IPR011009">
    <property type="entry name" value="Kinase-like_dom_sf"/>
</dbReference>
<dbReference type="InterPro" id="IPR000719">
    <property type="entry name" value="Prot_kinase_dom"/>
</dbReference>
<dbReference type="InterPro" id="IPR008271">
    <property type="entry name" value="Ser/Thr_kinase_AS"/>
</dbReference>
<dbReference type="PANTHER" id="PTHR43289">
    <property type="entry name" value="MITOGEN-ACTIVATED PROTEIN KINASE KINASE KINASE 20-RELATED"/>
    <property type="match status" value="1"/>
</dbReference>
<dbReference type="PANTHER" id="PTHR43289:SF34">
    <property type="entry name" value="SERINE_THREONINE-PROTEIN KINASE YBDM-RELATED"/>
    <property type="match status" value="1"/>
</dbReference>
<dbReference type="Pfam" id="PF00069">
    <property type="entry name" value="Pkinase"/>
    <property type="match status" value="1"/>
</dbReference>
<dbReference type="SMART" id="SM00220">
    <property type="entry name" value="S_TKc"/>
    <property type="match status" value="1"/>
</dbReference>
<dbReference type="SUPFAM" id="SSF56112">
    <property type="entry name" value="Protein kinase-like (PK-like)"/>
    <property type="match status" value="1"/>
</dbReference>
<dbReference type="PROSITE" id="PS50011">
    <property type="entry name" value="PROTEIN_KINASE_DOM"/>
    <property type="match status" value="1"/>
</dbReference>
<dbReference type="PROSITE" id="PS00108">
    <property type="entry name" value="PROTEIN_KINASE_ST"/>
    <property type="match status" value="1"/>
</dbReference>
<evidence type="ECO:0000250" key="1"/>
<evidence type="ECO:0000255" key="2"/>
<evidence type="ECO:0000255" key="3">
    <source>
        <dbReference type="PROSITE-ProRule" id="PRU00159"/>
    </source>
</evidence>
<evidence type="ECO:0000255" key="4">
    <source>
        <dbReference type="PROSITE-ProRule" id="PRU10027"/>
    </source>
</evidence>
<evidence type="ECO:0000256" key="5">
    <source>
        <dbReference type="SAM" id="MobiDB-lite"/>
    </source>
</evidence>